<comment type="function">
    <text evidence="1">Component of the dark-operative protochlorophyllide reductase (DPOR) that uses Mg-ATP and reduced ferredoxin to reduce ring D of protochlorophyllide (Pchlide) to form chlorophyllide a (Chlide). This reaction is light-independent. The NB-protein (BchN-BchB) is the catalytic component of the complex.</text>
</comment>
<comment type="catalytic activity">
    <reaction evidence="1">
        <text>chlorophyllide a + oxidized 2[4Fe-4S]-[ferredoxin] + 2 ADP + 2 phosphate = protochlorophyllide a + reduced 2[4Fe-4S]-[ferredoxin] + 2 ATP + 2 H2O</text>
        <dbReference type="Rhea" id="RHEA:28202"/>
        <dbReference type="Rhea" id="RHEA-COMP:10002"/>
        <dbReference type="Rhea" id="RHEA-COMP:10004"/>
        <dbReference type="ChEBI" id="CHEBI:15377"/>
        <dbReference type="ChEBI" id="CHEBI:30616"/>
        <dbReference type="ChEBI" id="CHEBI:33722"/>
        <dbReference type="ChEBI" id="CHEBI:33723"/>
        <dbReference type="ChEBI" id="CHEBI:43474"/>
        <dbReference type="ChEBI" id="CHEBI:83348"/>
        <dbReference type="ChEBI" id="CHEBI:83350"/>
        <dbReference type="ChEBI" id="CHEBI:456216"/>
        <dbReference type="EC" id="1.3.7.7"/>
    </reaction>
</comment>
<comment type="cofactor">
    <cofactor evidence="1">
        <name>[4Fe-4S] cluster</name>
        <dbReference type="ChEBI" id="CHEBI:49883"/>
    </cofactor>
    <text evidence="1">Binds 1 [4Fe-4S] cluster per heterodimer. The cluster is bound at the heterodimer interface by residues from both subunits.</text>
</comment>
<comment type="pathway">
    <text evidence="1">Porphyrin-containing compound metabolism; bacteriochlorophyll biosynthesis (light-independent).</text>
</comment>
<comment type="subunit">
    <text evidence="1">Protochlorophyllide reductase is composed of three subunits; BchL, BchN and BchB. Forms a heterotetramer of two BchB and two BchN subunits.</text>
</comment>
<comment type="similarity">
    <text evidence="1">Belongs to the BchN/ChlN family.</text>
</comment>
<gene>
    <name evidence="1" type="primary">bchN</name>
    <name type="ordered locus">Cpha266_2388</name>
</gene>
<proteinExistence type="inferred from homology"/>
<keyword id="KW-0004">4Fe-4S</keyword>
<keyword id="KW-0067">ATP-binding</keyword>
<keyword id="KW-0077">Bacteriochlorophyll biosynthesis</keyword>
<keyword id="KW-0149">Chlorophyll biosynthesis</keyword>
<keyword id="KW-0408">Iron</keyword>
<keyword id="KW-0411">Iron-sulfur</keyword>
<keyword id="KW-0479">Metal-binding</keyword>
<keyword id="KW-0547">Nucleotide-binding</keyword>
<keyword id="KW-0560">Oxidoreductase</keyword>
<keyword id="KW-0602">Photosynthesis</keyword>
<keyword id="KW-1185">Reference proteome</keyword>
<protein>
    <recommendedName>
        <fullName evidence="1">Light-independent protochlorophyllide reductase subunit N</fullName>
        <shortName evidence="1">DPOR subunit N</shortName>
        <shortName evidence="1">LI-POR subunit N</shortName>
        <ecNumber evidence="1">1.3.7.7</ecNumber>
    </recommendedName>
</protein>
<organism>
    <name type="scientific">Chlorobium phaeobacteroides (strain DSM 266 / SMG 266 / 2430)</name>
    <dbReference type="NCBI Taxonomy" id="290317"/>
    <lineage>
        <taxon>Bacteria</taxon>
        <taxon>Pseudomonadati</taxon>
        <taxon>Chlorobiota</taxon>
        <taxon>Chlorobiia</taxon>
        <taxon>Chlorobiales</taxon>
        <taxon>Chlorobiaceae</taxon>
        <taxon>Chlorobium/Pelodictyon group</taxon>
        <taxon>Chlorobium</taxon>
    </lineage>
</organism>
<sequence>MMQVPGDVQIIKEDNVTHSFCGLACVGWMYQKIKDSFFLILGTHTCAHFLQNALGMMIFAKPRFGIALIEEGDLSKHEPTLEEIISEIKADHNPSVIFLLSSCTPEVMKVDFKGLANQLSTDEVPVLFVPASGLVYNFTQAEDSVLHALVPFCPVAPAGQKNVVFLGSVNDATADDLRAEAEALGIPVGGFLPESRFDKMPAIGPDTVLAPVQPYLSRVAVKLERERGARVLHSLFPFGPDGTRVFWEDLAREFGITVDLRDREKAAWDKIQKQTALLRGKKVFLTADTMMELPLARFLKNAGAEVVECSSAYINKKFHAHELEALQGVRVVEQPNFHRQLEDVTRIQPDLIITSLMTANPFAGHGFVVKWSMEFMLMPIHSWSGVIPLANLFVSPLQRRSKLPAFDKDVWIEGVMPSAE</sequence>
<reference key="1">
    <citation type="submission" date="2006-12" db="EMBL/GenBank/DDBJ databases">
        <title>Complete sequence of Chlorobium phaeobacteroides DSM 266.</title>
        <authorList>
            <consortium name="US DOE Joint Genome Institute"/>
            <person name="Copeland A."/>
            <person name="Lucas S."/>
            <person name="Lapidus A."/>
            <person name="Barry K."/>
            <person name="Detter J.C."/>
            <person name="Glavina del Rio T."/>
            <person name="Hammon N."/>
            <person name="Israni S."/>
            <person name="Pitluck S."/>
            <person name="Goltsman E."/>
            <person name="Schmutz J."/>
            <person name="Larimer F."/>
            <person name="Land M."/>
            <person name="Hauser L."/>
            <person name="Mikhailova N."/>
            <person name="Li T."/>
            <person name="Overmann J."/>
            <person name="Bryant D.A."/>
            <person name="Richardson P."/>
        </authorList>
    </citation>
    <scope>NUCLEOTIDE SEQUENCE [LARGE SCALE GENOMIC DNA]</scope>
    <source>
        <strain>DSM 266 / SMG 266 / 2430</strain>
    </source>
</reference>
<accession>A1BIZ9</accession>
<dbReference type="EC" id="1.3.7.7" evidence="1"/>
<dbReference type="EMBL" id="CP000492">
    <property type="protein sequence ID" value="ABL66376.1"/>
    <property type="molecule type" value="Genomic_DNA"/>
</dbReference>
<dbReference type="RefSeq" id="WP_011746159.1">
    <property type="nucleotide sequence ID" value="NC_008639.1"/>
</dbReference>
<dbReference type="SMR" id="A1BIZ9"/>
<dbReference type="STRING" id="290317.Cpha266_2388"/>
<dbReference type="KEGG" id="cph:Cpha266_2388"/>
<dbReference type="eggNOG" id="COG2710">
    <property type="taxonomic scope" value="Bacteria"/>
</dbReference>
<dbReference type="HOGENOM" id="CLU_037170_0_0_10"/>
<dbReference type="OrthoDB" id="5714774at2"/>
<dbReference type="UniPathway" id="UPA00671"/>
<dbReference type="Proteomes" id="UP000008701">
    <property type="component" value="Chromosome"/>
</dbReference>
<dbReference type="GO" id="GO:0051539">
    <property type="term" value="F:4 iron, 4 sulfur cluster binding"/>
    <property type="evidence" value="ECO:0007669"/>
    <property type="project" value="UniProtKB-UniRule"/>
</dbReference>
<dbReference type="GO" id="GO:0005524">
    <property type="term" value="F:ATP binding"/>
    <property type="evidence" value="ECO:0007669"/>
    <property type="project" value="UniProtKB-UniRule"/>
</dbReference>
<dbReference type="GO" id="GO:0046872">
    <property type="term" value="F:metal ion binding"/>
    <property type="evidence" value="ECO:0007669"/>
    <property type="project" value="UniProtKB-KW"/>
</dbReference>
<dbReference type="GO" id="GO:0016730">
    <property type="term" value="F:oxidoreductase activity, acting on iron-sulfur proteins as donors"/>
    <property type="evidence" value="ECO:0007669"/>
    <property type="project" value="InterPro"/>
</dbReference>
<dbReference type="GO" id="GO:0016636">
    <property type="term" value="F:oxidoreductase activity, acting on the CH-CH group of donors, iron-sulfur protein as acceptor"/>
    <property type="evidence" value="ECO:0007669"/>
    <property type="project" value="UniProtKB-UniRule"/>
</dbReference>
<dbReference type="GO" id="GO:0036070">
    <property type="term" value="P:light-independent bacteriochlorophyll biosynthetic process"/>
    <property type="evidence" value="ECO:0007669"/>
    <property type="project" value="UniProtKB-UniRule"/>
</dbReference>
<dbReference type="GO" id="GO:0019685">
    <property type="term" value="P:photosynthesis, dark reaction"/>
    <property type="evidence" value="ECO:0007669"/>
    <property type="project" value="InterPro"/>
</dbReference>
<dbReference type="Gene3D" id="3.40.50.1980">
    <property type="entry name" value="Nitrogenase molybdenum iron protein domain"/>
    <property type="match status" value="3"/>
</dbReference>
<dbReference type="HAMAP" id="MF_00352">
    <property type="entry name" value="ChlN_BchN"/>
    <property type="match status" value="1"/>
</dbReference>
<dbReference type="InterPro" id="IPR050293">
    <property type="entry name" value="LIPOR_BchN/ChlN"/>
</dbReference>
<dbReference type="InterPro" id="IPR000510">
    <property type="entry name" value="Nase/OxRdtase_comp1"/>
</dbReference>
<dbReference type="InterPro" id="IPR005970">
    <property type="entry name" value="Protochl_reductN"/>
</dbReference>
<dbReference type="NCBIfam" id="TIGR01279">
    <property type="entry name" value="DPOR_bchN"/>
    <property type="match status" value="1"/>
</dbReference>
<dbReference type="NCBIfam" id="NF002768">
    <property type="entry name" value="PRK02842.1"/>
    <property type="match status" value="1"/>
</dbReference>
<dbReference type="PANTHER" id="PTHR39429">
    <property type="entry name" value="LIGHT-INDEPENDENT PROTOCHLOROPHYLLIDE REDUCTASE SUBUNIT N"/>
    <property type="match status" value="1"/>
</dbReference>
<dbReference type="PANTHER" id="PTHR39429:SF3">
    <property type="entry name" value="LIGHT-INDEPENDENT PROTOCHLOROPHYLLIDE REDUCTASE SUBUNIT N"/>
    <property type="match status" value="1"/>
</dbReference>
<dbReference type="Pfam" id="PF00148">
    <property type="entry name" value="Oxidored_nitro"/>
    <property type="match status" value="1"/>
</dbReference>
<dbReference type="PIRSF" id="PIRSF000162">
    <property type="entry name" value="P_chlorophyll_rd"/>
    <property type="match status" value="1"/>
</dbReference>
<dbReference type="SUPFAM" id="SSF53807">
    <property type="entry name" value="Helical backbone' metal receptor"/>
    <property type="match status" value="1"/>
</dbReference>
<name>BCHN_CHLPD</name>
<feature type="chain" id="PRO_0000324003" description="Light-independent protochlorophyllide reductase subunit N">
    <location>
        <begin position="1"/>
        <end position="420"/>
    </location>
</feature>
<feature type="binding site" evidence="1">
    <location>
        <position position="21"/>
    </location>
    <ligand>
        <name>[4Fe-4S] cluster</name>
        <dbReference type="ChEBI" id="CHEBI:49883"/>
        <note>ligand shared with heterodimeric partner</note>
    </ligand>
</feature>
<feature type="binding site" evidence="1">
    <location>
        <position position="46"/>
    </location>
    <ligand>
        <name>[4Fe-4S] cluster</name>
        <dbReference type="ChEBI" id="CHEBI:49883"/>
        <note>ligand shared with heterodimeric partner</note>
    </ligand>
</feature>
<feature type="binding site" evidence="1">
    <location>
        <position position="103"/>
    </location>
    <ligand>
        <name>[4Fe-4S] cluster</name>
        <dbReference type="ChEBI" id="CHEBI:49883"/>
        <note>ligand shared with heterodimeric partner</note>
    </ligand>
</feature>
<evidence type="ECO:0000255" key="1">
    <source>
        <dbReference type="HAMAP-Rule" id="MF_00352"/>
    </source>
</evidence>